<gene>
    <name evidence="1" type="primary">rplW</name>
    <name type="ordered locus">RSKD131_0016</name>
</gene>
<organism>
    <name type="scientific">Cereibacter sphaeroides (strain KD131 / KCTC 12085)</name>
    <name type="common">Rhodobacter sphaeroides</name>
    <dbReference type="NCBI Taxonomy" id="557760"/>
    <lineage>
        <taxon>Bacteria</taxon>
        <taxon>Pseudomonadati</taxon>
        <taxon>Pseudomonadota</taxon>
        <taxon>Alphaproteobacteria</taxon>
        <taxon>Rhodobacterales</taxon>
        <taxon>Paracoccaceae</taxon>
        <taxon>Cereibacter</taxon>
    </lineage>
</organism>
<keyword id="KW-0687">Ribonucleoprotein</keyword>
<keyword id="KW-0689">Ribosomal protein</keyword>
<keyword id="KW-0694">RNA-binding</keyword>
<keyword id="KW-0699">rRNA-binding</keyword>
<feature type="chain" id="PRO_1000184103" description="Large ribosomal subunit protein uL23">
    <location>
        <begin position="1"/>
        <end position="98"/>
    </location>
</feature>
<comment type="function">
    <text evidence="1">One of the early assembly proteins it binds 23S rRNA. One of the proteins that surrounds the polypeptide exit tunnel on the outside of the ribosome. Forms the main docking site for trigger factor binding to the ribosome.</text>
</comment>
<comment type="subunit">
    <text evidence="1">Part of the 50S ribosomal subunit. Contacts protein L29, and trigger factor when it is bound to the ribosome.</text>
</comment>
<comment type="similarity">
    <text evidence="1">Belongs to the universal ribosomal protein uL23 family.</text>
</comment>
<sequence length="98" mass="10693">MTAKPEHYDVIRKPVITEKATMTSEANGVVFAVAMEATKPQIKEAVEAIFNVKVKAVNTVVTKGKTKKFKGRPGVRSDRKKAYVTLEEGNTIDVSTGL</sequence>
<dbReference type="EMBL" id="CP001150">
    <property type="protein sequence ID" value="ACL99875.1"/>
    <property type="molecule type" value="Genomic_DNA"/>
</dbReference>
<dbReference type="RefSeq" id="WP_002722494.1">
    <property type="nucleotide sequence ID" value="NC_011963.1"/>
</dbReference>
<dbReference type="SMR" id="B9KL93"/>
<dbReference type="GeneID" id="67445502"/>
<dbReference type="KEGG" id="rsk:RSKD131_0016"/>
<dbReference type="HOGENOM" id="CLU_037562_3_1_5"/>
<dbReference type="GO" id="GO:1990904">
    <property type="term" value="C:ribonucleoprotein complex"/>
    <property type="evidence" value="ECO:0007669"/>
    <property type="project" value="UniProtKB-KW"/>
</dbReference>
<dbReference type="GO" id="GO:0005840">
    <property type="term" value="C:ribosome"/>
    <property type="evidence" value="ECO:0007669"/>
    <property type="project" value="UniProtKB-KW"/>
</dbReference>
<dbReference type="GO" id="GO:0019843">
    <property type="term" value="F:rRNA binding"/>
    <property type="evidence" value="ECO:0007669"/>
    <property type="project" value="UniProtKB-UniRule"/>
</dbReference>
<dbReference type="GO" id="GO:0003735">
    <property type="term" value="F:structural constituent of ribosome"/>
    <property type="evidence" value="ECO:0007669"/>
    <property type="project" value="InterPro"/>
</dbReference>
<dbReference type="GO" id="GO:0006412">
    <property type="term" value="P:translation"/>
    <property type="evidence" value="ECO:0007669"/>
    <property type="project" value="UniProtKB-UniRule"/>
</dbReference>
<dbReference type="FunFam" id="3.30.70.330:FF:000001">
    <property type="entry name" value="50S ribosomal protein L23"/>
    <property type="match status" value="1"/>
</dbReference>
<dbReference type="Gene3D" id="3.30.70.330">
    <property type="match status" value="1"/>
</dbReference>
<dbReference type="HAMAP" id="MF_01369_B">
    <property type="entry name" value="Ribosomal_uL23_B"/>
    <property type="match status" value="1"/>
</dbReference>
<dbReference type="InterPro" id="IPR012677">
    <property type="entry name" value="Nucleotide-bd_a/b_plait_sf"/>
</dbReference>
<dbReference type="InterPro" id="IPR013025">
    <property type="entry name" value="Ribosomal_uL23-like"/>
</dbReference>
<dbReference type="InterPro" id="IPR012678">
    <property type="entry name" value="Ribosomal_uL23/eL15/eS24_sf"/>
</dbReference>
<dbReference type="NCBIfam" id="NF004359">
    <property type="entry name" value="PRK05738.1-3"/>
    <property type="match status" value="1"/>
</dbReference>
<dbReference type="NCBIfam" id="NF004360">
    <property type="entry name" value="PRK05738.1-5"/>
    <property type="match status" value="1"/>
</dbReference>
<dbReference type="NCBIfam" id="NF004363">
    <property type="entry name" value="PRK05738.2-4"/>
    <property type="match status" value="1"/>
</dbReference>
<dbReference type="PANTHER" id="PTHR11620">
    <property type="entry name" value="60S RIBOSOMAL PROTEIN L23A"/>
    <property type="match status" value="1"/>
</dbReference>
<dbReference type="Pfam" id="PF00276">
    <property type="entry name" value="Ribosomal_L23"/>
    <property type="match status" value="1"/>
</dbReference>
<dbReference type="SUPFAM" id="SSF54189">
    <property type="entry name" value="Ribosomal proteins S24e, L23 and L15e"/>
    <property type="match status" value="1"/>
</dbReference>
<protein>
    <recommendedName>
        <fullName evidence="1">Large ribosomal subunit protein uL23</fullName>
    </recommendedName>
    <alternativeName>
        <fullName evidence="2">50S ribosomal protein L23</fullName>
    </alternativeName>
</protein>
<accession>B9KL93</accession>
<evidence type="ECO:0000255" key="1">
    <source>
        <dbReference type="HAMAP-Rule" id="MF_01369"/>
    </source>
</evidence>
<evidence type="ECO:0000305" key="2"/>
<name>RL23_CERSK</name>
<proteinExistence type="inferred from homology"/>
<reference key="1">
    <citation type="journal article" date="2009" name="J. Bacteriol.">
        <title>Complete genome sequence of Rhodobacter sphaeroides KD131.</title>
        <authorList>
            <person name="Lim S.-K."/>
            <person name="Kim S.J."/>
            <person name="Cha S.H."/>
            <person name="Oh Y.-K."/>
            <person name="Rhee H.-J."/>
            <person name="Kim M.-S."/>
            <person name="Lee J.K."/>
        </authorList>
    </citation>
    <scope>NUCLEOTIDE SEQUENCE [LARGE SCALE GENOMIC DNA]</scope>
    <source>
        <strain>KD131 / KCTC 12085</strain>
    </source>
</reference>